<proteinExistence type="predicted"/>
<reference key="1">
    <citation type="journal article" date="1996" name="EMBO J.">
        <title>The chloroplast ycf7 (petL) open reading frame of Chlamydomonas reinhardtii encodes a small functionally important subunit of the cytochrome b6f complex.</title>
        <authorList>
            <person name="Takahashi Y."/>
            <person name="Rahire M."/>
            <person name="Breyton C."/>
            <person name="Popot J.-L."/>
            <person name="Joliot P."/>
            <person name="Rochaix J.-D."/>
        </authorList>
    </citation>
    <scope>NUCLEOTIDE SEQUENCE [GENOMIC DNA]</scope>
    <source>
        <strain>137c / CC-125</strain>
    </source>
</reference>
<reference key="2">
    <citation type="journal article" date="2009" name="BMC Evol. Biol.">
        <title>Nucleotide diversity of the Chlamydomonas reinhardtii plastid genome: addressing the mutational-hazard hypothesis.</title>
        <authorList>
            <person name="Smith D.R."/>
            <person name="Lee R.W."/>
        </authorList>
    </citation>
    <scope>NUCLEOTIDE SEQUENCE [LARGE SCALE GENOMIC DNA]</scope>
    <source>
        <strain>CC-503</strain>
    </source>
</reference>
<reference key="3">
    <citation type="journal article" date="2002" name="Plant Cell">
        <title>The Chlamydomonas reinhardtii plastid chromosome: islands of genes in a sea of repeats.</title>
        <authorList>
            <person name="Maul J.E."/>
            <person name="Lilly J.W."/>
            <person name="Cui L."/>
            <person name="dePamphilis C.W."/>
            <person name="Miller W."/>
            <person name="Harris E.H."/>
            <person name="Stern D.B."/>
        </authorList>
    </citation>
    <scope>IDENTIFICATION</scope>
    <scope>COMPLETE PLASTID GENOME</scope>
</reference>
<accession>Q32063</accession>
<geneLocation type="chloroplast"/>
<feature type="chain" id="PRO_0000217503" description="Uncharacterized 6.2 kDa protein in psaC-petL intergenic region">
    <location>
        <begin position="1"/>
        <end position="58"/>
    </location>
</feature>
<organism>
    <name type="scientific">Chlamydomonas reinhardtii</name>
    <name type="common">Chlamydomonas smithii</name>
    <dbReference type="NCBI Taxonomy" id="3055"/>
    <lineage>
        <taxon>Eukaryota</taxon>
        <taxon>Viridiplantae</taxon>
        <taxon>Chlorophyta</taxon>
        <taxon>core chlorophytes</taxon>
        <taxon>Chlorophyceae</taxon>
        <taxon>CS clade</taxon>
        <taxon>Chlamydomonadales</taxon>
        <taxon>Chlamydomonadaceae</taxon>
        <taxon>Chlamydomonas</taxon>
    </lineage>
</organism>
<name>YCX8_CHLRE</name>
<comment type="subcellular location">
    <subcellularLocation>
        <location>Plastid</location>
        <location>Chloroplast</location>
    </subcellularLocation>
</comment>
<dbReference type="EMBL" id="U43964">
    <property type="protein sequence ID" value="AAB17715.1"/>
    <property type="molecule type" value="Genomic_DNA"/>
</dbReference>
<dbReference type="EMBL" id="FJ423446">
    <property type="status" value="NOT_ANNOTATED_CDS"/>
    <property type="molecule type" value="Genomic_DNA"/>
</dbReference>
<dbReference type="EMBL" id="BK000554">
    <property type="status" value="NOT_ANNOTATED_CDS"/>
    <property type="molecule type" value="Genomic_DNA"/>
</dbReference>
<dbReference type="PIR" id="T08023">
    <property type="entry name" value="T08023"/>
</dbReference>
<dbReference type="SMR" id="Q32063"/>
<dbReference type="STRING" id="3055.Q32063"/>
<dbReference type="InParanoid" id="Q32063"/>
<dbReference type="Proteomes" id="UP000006906">
    <property type="component" value="Chloroplast"/>
</dbReference>
<dbReference type="GO" id="GO:0009507">
    <property type="term" value="C:chloroplast"/>
    <property type="evidence" value="ECO:0007669"/>
    <property type="project" value="UniProtKB-SubCell"/>
</dbReference>
<keyword id="KW-0150">Chloroplast</keyword>
<keyword id="KW-0934">Plastid</keyword>
<keyword id="KW-1185">Reference proteome</keyword>
<sequence length="58" mass="6216">MTCTRTLLVLNRMLALKANFVLHSVKSYLNVSGVNKTLPAKGSAGVKNGFILSHLGCQ</sequence>
<protein>
    <recommendedName>
        <fullName>Uncharacterized 6.2 kDa protein in psaC-petL intergenic region</fullName>
    </recommendedName>
    <alternativeName>
        <fullName>ORF58</fullName>
    </alternativeName>
</protein>